<name>Y859_STACT</name>
<sequence>MSKNDLVKTLRMNYLFDFYQALLTKKQRNYLELFYLQDYSLSEIADTFDVSRQAVYDNIRRTGDLVEDYETKLELYSKFEQRREIYNQMKASIEDPDALKRYIEELEELE</sequence>
<proteinExistence type="inferred from homology"/>
<gene>
    <name type="ordered locus">Sca_0859</name>
</gene>
<keyword id="KW-1185">Reference proteome</keyword>
<feature type="chain" id="PRO_1000197592" description="UPF0122 protein Sca_0859">
    <location>
        <begin position="1"/>
        <end position="110"/>
    </location>
</feature>
<comment type="function">
    <text evidence="1">Might take part in the signal recognition particle (SRP) pathway. This is inferred from the conservation of its genetic proximity to ftsY/ffh. May be a regulatory protein.</text>
</comment>
<comment type="similarity">
    <text evidence="1">Belongs to the UPF0122 family.</text>
</comment>
<evidence type="ECO:0000255" key="1">
    <source>
        <dbReference type="HAMAP-Rule" id="MF_00245"/>
    </source>
</evidence>
<reference key="1">
    <citation type="journal article" date="2009" name="Appl. Environ. Microbiol.">
        <title>Genome analysis of the meat starter culture bacterium Staphylococcus carnosus TM300.</title>
        <authorList>
            <person name="Rosenstein R."/>
            <person name="Nerz C."/>
            <person name="Biswas L."/>
            <person name="Resch A."/>
            <person name="Raddatz G."/>
            <person name="Schuster S.C."/>
            <person name="Goetz F."/>
        </authorList>
    </citation>
    <scope>NUCLEOTIDE SEQUENCE [LARGE SCALE GENOMIC DNA]</scope>
    <source>
        <strain>TM300</strain>
    </source>
</reference>
<protein>
    <recommendedName>
        <fullName evidence="1">UPF0122 protein Sca_0859</fullName>
    </recommendedName>
</protein>
<accession>B9DPJ5</accession>
<dbReference type="EMBL" id="AM295250">
    <property type="protein sequence ID" value="CAL27769.1"/>
    <property type="molecule type" value="Genomic_DNA"/>
</dbReference>
<dbReference type="RefSeq" id="WP_015900110.1">
    <property type="nucleotide sequence ID" value="NC_012121.1"/>
</dbReference>
<dbReference type="SMR" id="B9DPJ5"/>
<dbReference type="KEGG" id="sca:SCA_0859"/>
<dbReference type="eggNOG" id="COG2739">
    <property type="taxonomic scope" value="Bacteria"/>
</dbReference>
<dbReference type="HOGENOM" id="CLU_129218_1_1_9"/>
<dbReference type="OrthoDB" id="6392at2"/>
<dbReference type="BioCyc" id="SCAR396513:SCA_RS04345-MONOMER"/>
<dbReference type="Proteomes" id="UP000000444">
    <property type="component" value="Chromosome"/>
</dbReference>
<dbReference type="Gene3D" id="1.10.10.10">
    <property type="entry name" value="Winged helix-like DNA-binding domain superfamily/Winged helix DNA-binding domain"/>
    <property type="match status" value="1"/>
</dbReference>
<dbReference type="HAMAP" id="MF_00245">
    <property type="entry name" value="UPF0122"/>
    <property type="match status" value="1"/>
</dbReference>
<dbReference type="InterPro" id="IPR013324">
    <property type="entry name" value="RNA_pol_sigma_r3/r4-like"/>
</dbReference>
<dbReference type="InterPro" id="IPR007394">
    <property type="entry name" value="UPF0122"/>
</dbReference>
<dbReference type="InterPro" id="IPR054831">
    <property type="entry name" value="UPF0122_fam_protein"/>
</dbReference>
<dbReference type="InterPro" id="IPR036388">
    <property type="entry name" value="WH-like_DNA-bd_sf"/>
</dbReference>
<dbReference type="NCBIfam" id="NF001067">
    <property type="entry name" value="PRK00118.1-2"/>
    <property type="match status" value="1"/>
</dbReference>
<dbReference type="NCBIfam" id="NF001070">
    <property type="entry name" value="PRK00118.1-6"/>
    <property type="match status" value="1"/>
</dbReference>
<dbReference type="NCBIfam" id="NF045758">
    <property type="entry name" value="YlxM"/>
    <property type="match status" value="1"/>
</dbReference>
<dbReference type="PANTHER" id="PTHR40083">
    <property type="entry name" value="UPF0122 PROTEIN CBO2450/CLC_2298"/>
    <property type="match status" value="1"/>
</dbReference>
<dbReference type="PANTHER" id="PTHR40083:SF1">
    <property type="entry name" value="UPF0122 PROTEIN YLXM"/>
    <property type="match status" value="1"/>
</dbReference>
<dbReference type="Pfam" id="PF04297">
    <property type="entry name" value="UPF0122"/>
    <property type="match status" value="1"/>
</dbReference>
<dbReference type="SUPFAM" id="SSF88659">
    <property type="entry name" value="Sigma3 and sigma4 domains of RNA polymerase sigma factors"/>
    <property type="match status" value="1"/>
</dbReference>
<organism>
    <name type="scientific">Staphylococcus carnosus (strain TM300)</name>
    <dbReference type="NCBI Taxonomy" id="396513"/>
    <lineage>
        <taxon>Bacteria</taxon>
        <taxon>Bacillati</taxon>
        <taxon>Bacillota</taxon>
        <taxon>Bacilli</taxon>
        <taxon>Bacillales</taxon>
        <taxon>Staphylococcaceae</taxon>
        <taxon>Staphylococcus</taxon>
    </lineage>
</organism>